<accession>Q8C811</accession>
<gene>
    <name type="primary">Slc35e2a</name>
    <name evidence="5" type="synonym">Slc35e2</name>
</gene>
<organism>
    <name type="scientific">Mus musculus</name>
    <name type="common">Mouse</name>
    <dbReference type="NCBI Taxonomy" id="10090"/>
    <lineage>
        <taxon>Eukaryota</taxon>
        <taxon>Metazoa</taxon>
        <taxon>Chordata</taxon>
        <taxon>Craniata</taxon>
        <taxon>Vertebrata</taxon>
        <taxon>Euteleostomi</taxon>
        <taxon>Mammalia</taxon>
        <taxon>Eutheria</taxon>
        <taxon>Euarchontoglires</taxon>
        <taxon>Glires</taxon>
        <taxon>Rodentia</taxon>
        <taxon>Myomorpha</taxon>
        <taxon>Muroidea</taxon>
        <taxon>Muridae</taxon>
        <taxon>Murinae</taxon>
        <taxon>Mus</taxon>
        <taxon>Mus</taxon>
    </lineage>
</organism>
<evidence type="ECO:0000250" key="1"/>
<evidence type="ECO:0000255" key="2"/>
<evidence type="ECO:0000256" key="3">
    <source>
        <dbReference type="SAM" id="MobiDB-lite"/>
    </source>
</evidence>
<evidence type="ECO:0000305" key="4"/>
<evidence type="ECO:0000312" key="5">
    <source>
        <dbReference type="MGI" id="MGI:2444240"/>
    </source>
</evidence>
<proteinExistence type="evidence at transcript level"/>
<feature type="chain" id="PRO_0000305058" description="Solute carrier family 35 member E2A">
    <location>
        <begin position="1"/>
        <end position="405"/>
    </location>
</feature>
<feature type="transmembrane region" description="Helical" evidence="2">
    <location>
        <begin position="76"/>
        <end position="96"/>
    </location>
</feature>
<feature type="transmembrane region" description="Helical" evidence="2">
    <location>
        <begin position="106"/>
        <end position="126"/>
    </location>
</feature>
<feature type="transmembrane region" description="Helical" evidence="2">
    <location>
        <begin position="142"/>
        <end position="162"/>
    </location>
</feature>
<feature type="transmembrane region" description="Helical" evidence="2">
    <location>
        <begin position="167"/>
        <end position="187"/>
    </location>
</feature>
<feature type="transmembrane region" description="Helical" evidence="2">
    <location>
        <begin position="195"/>
        <end position="215"/>
    </location>
</feature>
<feature type="transmembrane region" description="Helical" evidence="2">
    <location>
        <begin position="219"/>
        <end position="241"/>
    </location>
</feature>
<feature type="transmembrane region" description="Helical" evidence="2">
    <location>
        <begin position="264"/>
        <end position="284"/>
    </location>
</feature>
<feature type="transmembrane region" description="Helical" evidence="2">
    <location>
        <begin position="296"/>
        <end position="316"/>
    </location>
</feature>
<feature type="transmembrane region" description="Helical" evidence="2">
    <location>
        <begin position="326"/>
        <end position="346"/>
    </location>
</feature>
<feature type="transmembrane region" description="Helical" evidence="2">
    <location>
        <begin position="347"/>
        <end position="367"/>
    </location>
</feature>
<feature type="region of interest" description="Disordered" evidence="3">
    <location>
        <begin position="1"/>
        <end position="22"/>
    </location>
</feature>
<feature type="region of interest" description="Disordered" evidence="3">
    <location>
        <begin position="380"/>
        <end position="405"/>
    </location>
</feature>
<protein>
    <recommendedName>
        <fullName evidence="4">Solute carrier family 35 member E2A</fullName>
    </recommendedName>
</protein>
<comment type="function">
    <text evidence="1">Putative transporter.</text>
</comment>
<comment type="subcellular location">
    <subcellularLocation>
        <location evidence="4">Membrane</location>
        <topology evidence="4">Multi-pass membrane protein</topology>
    </subcellularLocation>
</comment>
<comment type="similarity">
    <text evidence="4">Belongs to the TPT transporter family. SLC35E subfamily.</text>
</comment>
<sequence length="405" mass="44279">MSAAAKSQVPEEAAPGCEEEPKGKTLLTWGSLFGHRSEKIVFTKGDGSPEESLLTVTITETTVIESDLGVWSSRALIYLTLWFFFSFCTLFLNKYILSLLEGEPSMLGAVQMLSTTLIGCVKIFVPCCLYQHKTRLSYPPNFIMTMLFVGLMRFATVVLGLVSLKNVAVSFAETVKSSAPIFTVIMSRMILGEYTGLLVNLSLIPVMGGLALCTATEISFNILGFSAALSTNIMDCLQNVFSKKLLSGDKYRFSAPELQFYTSAAAVALLIPAWTFFMDIPVIGRSGKSFSYSQDIVLLLLTDGALFHLQSVTAYALMGKISPVTFSVASTVKHALSIWLSIIVFGNKITSLSAIGTILVTLGVLLYNKARQYQQETMQSLVTATSRNPEDDTEPLVPQDSRQHH</sequence>
<dbReference type="EMBL" id="AK048716">
    <property type="protein sequence ID" value="BAC33431.1"/>
    <property type="molecule type" value="mRNA"/>
</dbReference>
<dbReference type="EMBL" id="AK145065">
    <property type="protein sequence ID" value="BAE26216.1"/>
    <property type="molecule type" value="mRNA"/>
</dbReference>
<dbReference type="EMBL" id="AK157354">
    <property type="protein sequence ID" value="BAE34060.1"/>
    <property type="molecule type" value="mRNA"/>
</dbReference>
<dbReference type="EMBL" id="AL627405">
    <property type="status" value="NOT_ANNOTATED_CDS"/>
    <property type="molecule type" value="Genomic_DNA"/>
</dbReference>
<dbReference type="EMBL" id="BC058728">
    <property type="protein sequence ID" value="AAH58728.1"/>
    <property type="molecule type" value="mRNA"/>
</dbReference>
<dbReference type="CCDS" id="CCDS38995.1"/>
<dbReference type="RefSeq" id="NP_796160.1">
    <property type="nucleotide sequence ID" value="NM_177186.4"/>
</dbReference>
<dbReference type="RefSeq" id="XP_006539015.1">
    <property type="nucleotide sequence ID" value="XM_006538952.3"/>
</dbReference>
<dbReference type="RefSeq" id="XP_006539016.1">
    <property type="nucleotide sequence ID" value="XM_006538953.3"/>
</dbReference>
<dbReference type="SMR" id="Q8C811"/>
<dbReference type="BioGRID" id="236100">
    <property type="interactions" value="1"/>
</dbReference>
<dbReference type="FunCoup" id="Q8C811">
    <property type="interactions" value="375"/>
</dbReference>
<dbReference type="STRING" id="10090.ENSMUSP00000101233"/>
<dbReference type="iPTMnet" id="Q8C811"/>
<dbReference type="PhosphoSitePlus" id="Q8C811"/>
<dbReference type="PaxDb" id="10090-ENSMUSP00000101233"/>
<dbReference type="ProteomicsDB" id="256558"/>
<dbReference type="Antibodypedia" id="62304">
    <property type="antibodies" value="46 antibodies from 13 providers"/>
</dbReference>
<dbReference type="DNASU" id="320541"/>
<dbReference type="Ensembl" id="ENSMUST00000043829.11">
    <property type="protein sequence ID" value="ENSMUSP00000041449.5"/>
    <property type="gene ID" value="ENSMUSG00000042202.16"/>
</dbReference>
<dbReference type="Ensembl" id="ENSMUST00000105608.9">
    <property type="protein sequence ID" value="ENSMUSP00000101233.3"/>
    <property type="gene ID" value="ENSMUSG00000042202.16"/>
</dbReference>
<dbReference type="Ensembl" id="ENSMUST00000118607.2">
    <property type="protein sequence ID" value="ENSMUSP00000113189.2"/>
    <property type="gene ID" value="ENSMUSG00000042202.16"/>
</dbReference>
<dbReference type="GeneID" id="320541"/>
<dbReference type="KEGG" id="mmu:320541"/>
<dbReference type="UCSC" id="uc008wdw.2">
    <property type="organism name" value="mouse"/>
</dbReference>
<dbReference type="AGR" id="MGI:2444240"/>
<dbReference type="CTD" id="320541"/>
<dbReference type="MGI" id="MGI:2444240">
    <property type="gene designation" value="Slc35e2"/>
</dbReference>
<dbReference type="VEuPathDB" id="HostDB:ENSMUSG00000042202"/>
<dbReference type="eggNOG" id="KOG1441">
    <property type="taxonomic scope" value="Eukaryota"/>
</dbReference>
<dbReference type="GeneTree" id="ENSGT00940000159351"/>
<dbReference type="HOGENOM" id="CLU_019048_2_0_1"/>
<dbReference type="InParanoid" id="Q8C811"/>
<dbReference type="OMA" id="YFPCGMY"/>
<dbReference type="OrthoDB" id="5547497at2759"/>
<dbReference type="PhylomeDB" id="Q8C811"/>
<dbReference type="TreeFam" id="TF331257"/>
<dbReference type="BioGRID-ORCS" id="320541">
    <property type="hits" value="0 hits in 75 CRISPR screens"/>
</dbReference>
<dbReference type="PRO" id="PR:Q8C811"/>
<dbReference type="Proteomes" id="UP000000589">
    <property type="component" value="Chromosome 4"/>
</dbReference>
<dbReference type="RNAct" id="Q8C811">
    <property type="molecule type" value="protein"/>
</dbReference>
<dbReference type="Bgee" id="ENSMUSG00000042202">
    <property type="expression patterns" value="Expressed in manus and 220 other cell types or tissues"/>
</dbReference>
<dbReference type="GO" id="GO:0016020">
    <property type="term" value="C:membrane"/>
    <property type="evidence" value="ECO:0007669"/>
    <property type="project" value="UniProtKB-SubCell"/>
</dbReference>
<dbReference type="GO" id="GO:0001835">
    <property type="term" value="P:blastocyst hatching"/>
    <property type="evidence" value="ECO:0000315"/>
    <property type="project" value="MGI"/>
</dbReference>
<dbReference type="InterPro" id="IPR004853">
    <property type="entry name" value="Sugar_P_trans_dom"/>
</dbReference>
<dbReference type="InterPro" id="IPR050186">
    <property type="entry name" value="TPT_transporter"/>
</dbReference>
<dbReference type="PANTHER" id="PTHR11132">
    <property type="entry name" value="SOLUTE CARRIER FAMILY 35"/>
    <property type="match status" value="1"/>
</dbReference>
<dbReference type="Pfam" id="PF03151">
    <property type="entry name" value="TPT"/>
    <property type="match status" value="1"/>
</dbReference>
<dbReference type="SUPFAM" id="SSF103481">
    <property type="entry name" value="Multidrug resistance efflux transporter EmrE"/>
    <property type="match status" value="1"/>
</dbReference>
<keyword id="KW-0472">Membrane</keyword>
<keyword id="KW-1185">Reference proteome</keyword>
<keyword id="KW-0812">Transmembrane</keyword>
<keyword id="KW-1133">Transmembrane helix</keyword>
<reference key="1">
    <citation type="journal article" date="2005" name="Science">
        <title>The transcriptional landscape of the mammalian genome.</title>
        <authorList>
            <person name="Carninci P."/>
            <person name="Kasukawa T."/>
            <person name="Katayama S."/>
            <person name="Gough J."/>
            <person name="Frith M.C."/>
            <person name="Maeda N."/>
            <person name="Oyama R."/>
            <person name="Ravasi T."/>
            <person name="Lenhard B."/>
            <person name="Wells C."/>
            <person name="Kodzius R."/>
            <person name="Shimokawa K."/>
            <person name="Bajic V.B."/>
            <person name="Brenner S.E."/>
            <person name="Batalov S."/>
            <person name="Forrest A.R."/>
            <person name="Zavolan M."/>
            <person name="Davis M.J."/>
            <person name="Wilming L.G."/>
            <person name="Aidinis V."/>
            <person name="Allen J.E."/>
            <person name="Ambesi-Impiombato A."/>
            <person name="Apweiler R."/>
            <person name="Aturaliya R.N."/>
            <person name="Bailey T.L."/>
            <person name="Bansal M."/>
            <person name="Baxter L."/>
            <person name="Beisel K.W."/>
            <person name="Bersano T."/>
            <person name="Bono H."/>
            <person name="Chalk A.M."/>
            <person name="Chiu K.P."/>
            <person name="Choudhary V."/>
            <person name="Christoffels A."/>
            <person name="Clutterbuck D.R."/>
            <person name="Crowe M.L."/>
            <person name="Dalla E."/>
            <person name="Dalrymple B.P."/>
            <person name="de Bono B."/>
            <person name="Della Gatta G."/>
            <person name="di Bernardo D."/>
            <person name="Down T."/>
            <person name="Engstrom P."/>
            <person name="Fagiolini M."/>
            <person name="Faulkner G."/>
            <person name="Fletcher C.F."/>
            <person name="Fukushima T."/>
            <person name="Furuno M."/>
            <person name="Futaki S."/>
            <person name="Gariboldi M."/>
            <person name="Georgii-Hemming P."/>
            <person name="Gingeras T.R."/>
            <person name="Gojobori T."/>
            <person name="Green R.E."/>
            <person name="Gustincich S."/>
            <person name="Harbers M."/>
            <person name="Hayashi Y."/>
            <person name="Hensch T.K."/>
            <person name="Hirokawa N."/>
            <person name="Hill D."/>
            <person name="Huminiecki L."/>
            <person name="Iacono M."/>
            <person name="Ikeo K."/>
            <person name="Iwama A."/>
            <person name="Ishikawa T."/>
            <person name="Jakt M."/>
            <person name="Kanapin A."/>
            <person name="Katoh M."/>
            <person name="Kawasawa Y."/>
            <person name="Kelso J."/>
            <person name="Kitamura H."/>
            <person name="Kitano H."/>
            <person name="Kollias G."/>
            <person name="Krishnan S.P."/>
            <person name="Kruger A."/>
            <person name="Kummerfeld S.K."/>
            <person name="Kurochkin I.V."/>
            <person name="Lareau L.F."/>
            <person name="Lazarevic D."/>
            <person name="Lipovich L."/>
            <person name="Liu J."/>
            <person name="Liuni S."/>
            <person name="McWilliam S."/>
            <person name="Madan Babu M."/>
            <person name="Madera M."/>
            <person name="Marchionni L."/>
            <person name="Matsuda H."/>
            <person name="Matsuzawa S."/>
            <person name="Miki H."/>
            <person name="Mignone F."/>
            <person name="Miyake S."/>
            <person name="Morris K."/>
            <person name="Mottagui-Tabar S."/>
            <person name="Mulder N."/>
            <person name="Nakano N."/>
            <person name="Nakauchi H."/>
            <person name="Ng P."/>
            <person name="Nilsson R."/>
            <person name="Nishiguchi S."/>
            <person name="Nishikawa S."/>
            <person name="Nori F."/>
            <person name="Ohara O."/>
            <person name="Okazaki Y."/>
            <person name="Orlando V."/>
            <person name="Pang K.C."/>
            <person name="Pavan W.J."/>
            <person name="Pavesi G."/>
            <person name="Pesole G."/>
            <person name="Petrovsky N."/>
            <person name="Piazza S."/>
            <person name="Reed J."/>
            <person name="Reid J.F."/>
            <person name="Ring B.Z."/>
            <person name="Ringwald M."/>
            <person name="Rost B."/>
            <person name="Ruan Y."/>
            <person name="Salzberg S.L."/>
            <person name="Sandelin A."/>
            <person name="Schneider C."/>
            <person name="Schoenbach C."/>
            <person name="Sekiguchi K."/>
            <person name="Semple C.A."/>
            <person name="Seno S."/>
            <person name="Sessa L."/>
            <person name="Sheng Y."/>
            <person name="Shibata Y."/>
            <person name="Shimada H."/>
            <person name="Shimada K."/>
            <person name="Silva D."/>
            <person name="Sinclair B."/>
            <person name="Sperling S."/>
            <person name="Stupka E."/>
            <person name="Sugiura K."/>
            <person name="Sultana R."/>
            <person name="Takenaka Y."/>
            <person name="Taki K."/>
            <person name="Tammoja K."/>
            <person name="Tan S.L."/>
            <person name="Tang S."/>
            <person name="Taylor M.S."/>
            <person name="Tegner J."/>
            <person name="Teichmann S.A."/>
            <person name="Ueda H.R."/>
            <person name="van Nimwegen E."/>
            <person name="Verardo R."/>
            <person name="Wei C.L."/>
            <person name="Yagi K."/>
            <person name="Yamanishi H."/>
            <person name="Zabarovsky E."/>
            <person name="Zhu S."/>
            <person name="Zimmer A."/>
            <person name="Hide W."/>
            <person name="Bult C."/>
            <person name="Grimmond S.M."/>
            <person name="Teasdale R.D."/>
            <person name="Liu E.T."/>
            <person name="Brusic V."/>
            <person name="Quackenbush J."/>
            <person name="Wahlestedt C."/>
            <person name="Mattick J.S."/>
            <person name="Hume D.A."/>
            <person name="Kai C."/>
            <person name="Sasaki D."/>
            <person name="Tomaru Y."/>
            <person name="Fukuda S."/>
            <person name="Kanamori-Katayama M."/>
            <person name="Suzuki M."/>
            <person name="Aoki J."/>
            <person name="Arakawa T."/>
            <person name="Iida J."/>
            <person name="Imamura K."/>
            <person name="Itoh M."/>
            <person name="Kato T."/>
            <person name="Kawaji H."/>
            <person name="Kawagashira N."/>
            <person name="Kawashima T."/>
            <person name="Kojima M."/>
            <person name="Kondo S."/>
            <person name="Konno H."/>
            <person name="Nakano K."/>
            <person name="Ninomiya N."/>
            <person name="Nishio T."/>
            <person name="Okada M."/>
            <person name="Plessy C."/>
            <person name="Shibata K."/>
            <person name="Shiraki T."/>
            <person name="Suzuki S."/>
            <person name="Tagami M."/>
            <person name="Waki K."/>
            <person name="Watahiki A."/>
            <person name="Okamura-Oho Y."/>
            <person name="Suzuki H."/>
            <person name="Kawai J."/>
            <person name="Hayashizaki Y."/>
        </authorList>
    </citation>
    <scope>NUCLEOTIDE SEQUENCE [LARGE SCALE MRNA]</scope>
    <source>
        <strain>C57BL/6J</strain>
        <strain>NOD</strain>
        <tissue>Cerebellum</tissue>
        <tissue>Mammary gland</tissue>
        <tissue>Spleen</tissue>
    </source>
</reference>
<reference key="2">
    <citation type="journal article" date="2009" name="PLoS Biol.">
        <title>Lineage-specific biology revealed by a finished genome assembly of the mouse.</title>
        <authorList>
            <person name="Church D.M."/>
            <person name="Goodstadt L."/>
            <person name="Hillier L.W."/>
            <person name="Zody M.C."/>
            <person name="Goldstein S."/>
            <person name="She X."/>
            <person name="Bult C.J."/>
            <person name="Agarwala R."/>
            <person name="Cherry J.L."/>
            <person name="DiCuccio M."/>
            <person name="Hlavina W."/>
            <person name="Kapustin Y."/>
            <person name="Meric P."/>
            <person name="Maglott D."/>
            <person name="Birtle Z."/>
            <person name="Marques A.C."/>
            <person name="Graves T."/>
            <person name="Zhou S."/>
            <person name="Teague B."/>
            <person name="Potamousis K."/>
            <person name="Churas C."/>
            <person name="Place M."/>
            <person name="Herschleb J."/>
            <person name="Runnheim R."/>
            <person name="Forrest D."/>
            <person name="Amos-Landgraf J."/>
            <person name="Schwartz D.C."/>
            <person name="Cheng Z."/>
            <person name="Lindblad-Toh K."/>
            <person name="Eichler E.E."/>
            <person name="Ponting C.P."/>
        </authorList>
    </citation>
    <scope>NUCLEOTIDE SEQUENCE [LARGE SCALE GENOMIC DNA]</scope>
    <source>
        <strain>C57BL/6J</strain>
    </source>
</reference>
<reference key="3">
    <citation type="journal article" date="2004" name="Genome Res.">
        <title>The status, quality, and expansion of the NIH full-length cDNA project: the Mammalian Gene Collection (MGC).</title>
        <authorList>
            <consortium name="The MGC Project Team"/>
        </authorList>
    </citation>
    <scope>NUCLEOTIDE SEQUENCE [LARGE SCALE MRNA]</scope>
    <source>
        <strain>C57BL/6J</strain>
        <tissue>Brain</tissue>
    </source>
</reference>
<name>S35E2_MOUSE</name>